<geneLocation type="chloroplast"/>
<feature type="chain" id="PRO_0000272909" description="Large ribosomal subunit protein uL23cz/uL23cy">
    <location>
        <begin position="1"/>
        <end position="93"/>
    </location>
</feature>
<keyword id="KW-0150">Chloroplast</keyword>
<keyword id="KW-0934">Plastid</keyword>
<keyword id="KW-0687">Ribonucleoprotein</keyword>
<keyword id="KW-0689">Ribosomal protein</keyword>
<keyword id="KW-0694">RNA-binding</keyword>
<keyword id="KW-0699">rRNA-binding</keyword>
<protein>
    <recommendedName>
        <fullName evidence="2">Large ribosomal subunit protein uL23cz/uL23cy</fullName>
    </recommendedName>
    <alternativeName>
        <fullName>50S ribosomal protein L23, chloroplastic</fullName>
    </alternativeName>
</protein>
<reference key="1">
    <citation type="journal article" date="2006" name="BMC Plant Biol.">
        <title>Rapid and accurate pyrosequencing of angiosperm plastid genomes.</title>
        <authorList>
            <person name="Moore M.J."/>
            <person name="Dhingra A."/>
            <person name="Soltis P.S."/>
            <person name="Shaw R."/>
            <person name="Farmerie W.G."/>
            <person name="Folta K.M."/>
            <person name="Soltis D.E."/>
        </authorList>
    </citation>
    <scope>NUCLEOTIDE SEQUENCE [LARGE SCALE GENOMIC DNA]</scope>
</reference>
<accession>Q09FP7</accession>
<comment type="function">
    <text evidence="1">Binds to 23S rRNA.</text>
</comment>
<comment type="subunit">
    <text evidence="1">Part of the 50S ribosomal subunit.</text>
</comment>
<comment type="subcellular location">
    <subcellularLocation>
        <location>Plastid</location>
        <location>Chloroplast</location>
    </subcellularLocation>
</comment>
<comment type="similarity">
    <text evidence="2">Belongs to the universal ribosomal protein uL23 family.</text>
</comment>
<name>RK23_NANDO</name>
<sequence length="93" mass="10719">MDGIKYAVFTDKSIRLLGNNQYTSNVESGSTRTEIKHWVELFFGVKVIAMNSHRLPGKGRRMGPIMGHTMHYRRMIITLQPGYSIPPLRKKRT</sequence>
<dbReference type="EMBL" id="DQ923117">
    <property type="protein sequence ID" value="ABI49907.1"/>
    <property type="molecule type" value="Genomic_DNA"/>
</dbReference>
<dbReference type="EMBL" id="DQ923117">
    <property type="protein sequence ID" value="ABI49928.1"/>
    <property type="molecule type" value="Genomic_DNA"/>
</dbReference>
<dbReference type="SMR" id="Q09FP7"/>
<dbReference type="GO" id="GO:0009507">
    <property type="term" value="C:chloroplast"/>
    <property type="evidence" value="ECO:0007669"/>
    <property type="project" value="UniProtKB-SubCell"/>
</dbReference>
<dbReference type="GO" id="GO:1990904">
    <property type="term" value="C:ribonucleoprotein complex"/>
    <property type="evidence" value="ECO:0007669"/>
    <property type="project" value="UniProtKB-KW"/>
</dbReference>
<dbReference type="GO" id="GO:0005840">
    <property type="term" value="C:ribosome"/>
    <property type="evidence" value="ECO:0007669"/>
    <property type="project" value="UniProtKB-KW"/>
</dbReference>
<dbReference type="GO" id="GO:0019843">
    <property type="term" value="F:rRNA binding"/>
    <property type="evidence" value="ECO:0007669"/>
    <property type="project" value="UniProtKB-UniRule"/>
</dbReference>
<dbReference type="GO" id="GO:0003735">
    <property type="term" value="F:structural constituent of ribosome"/>
    <property type="evidence" value="ECO:0007669"/>
    <property type="project" value="InterPro"/>
</dbReference>
<dbReference type="GO" id="GO:0006412">
    <property type="term" value="P:translation"/>
    <property type="evidence" value="ECO:0007669"/>
    <property type="project" value="UniProtKB-UniRule"/>
</dbReference>
<dbReference type="FunFam" id="3.30.70.330:FF:000002">
    <property type="entry name" value="50S ribosomal protein L23, chloroplastic"/>
    <property type="match status" value="1"/>
</dbReference>
<dbReference type="Gene3D" id="3.30.70.330">
    <property type="match status" value="1"/>
</dbReference>
<dbReference type="HAMAP" id="MF_01369_B">
    <property type="entry name" value="Ribosomal_uL23_B"/>
    <property type="match status" value="1"/>
</dbReference>
<dbReference type="InterPro" id="IPR012677">
    <property type="entry name" value="Nucleotide-bd_a/b_plait_sf"/>
</dbReference>
<dbReference type="InterPro" id="IPR013025">
    <property type="entry name" value="Ribosomal_uL23-like"/>
</dbReference>
<dbReference type="InterPro" id="IPR012678">
    <property type="entry name" value="Ribosomal_uL23/eL15/eS24_sf"/>
</dbReference>
<dbReference type="InterPro" id="IPR001014">
    <property type="entry name" value="Ribosomal_uL23_CS"/>
</dbReference>
<dbReference type="PANTHER" id="PTHR11620">
    <property type="entry name" value="60S RIBOSOMAL PROTEIN L23A"/>
    <property type="match status" value="1"/>
</dbReference>
<dbReference type="Pfam" id="PF00276">
    <property type="entry name" value="Ribosomal_L23"/>
    <property type="match status" value="1"/>
</dbReference>
<dbReference type="SUPFAM" id="SSF54189">
    <property type="entry name" value="Ribosomal proteins S24e, L23 and L15e"/>
    <property type="match status" value="1"/>
</dbReference>
<dbReference type="PROSITE" id="PS00050">
    <property type="entry name" value="RIBOSOMAL_L23"/>
    <property type="match status" value="1"/>
</dbReference>
<organism>
    <name type="scientific">Nandina domestica</name>
    <name type="common">Heavenly bamboo</name>
    <dbReference type="NCBI Taxonomy" id="41776"/>
    <lineage>
        <taxon>Eukaryota</taxon>
        <taxon>Viridiplantae</taxon>
        <taxon>Streptophyta</taxon>
        <taxon>Embryophyta</taxon>
        <taxon>Tracheophyta</taxon>
        <taxon>Spermatophyta</taxon>
        <taxon>Magnoliopsida</taxon>
        <taxon>Ranunculales</taxon>
        <taxon>Berberidaceae</taxon>
        <taxon>Nandinoideae</taxon>
        <taxon>Nandineae</taxon>
        <taxon>Nandina</taxon>
    </lineage>
</organism>
<gene>
    <name type="primary">rpl23-A</name>
</gene>
<gene>
    <name type="primary">rpl23-B</name>
</gene>
<proteinExistence type="inferred from homology"/>
<evidence type="ECO:0000250" key="1"/>
<evidence type="ECO:0000305" key="2"/>